<sequence length="189" mass="20977">MSLINKEILPFTAQAFDPKKDQFKEVTQEDLKGSWSVVCFYPADFSFVCPTELEDLQNQYEELQKLGVNVFSVSTDTHFVHKAWHDHSDAISKITYTMIGDPSQTITRNFDVLDEATGLAQRGTFIIDPDGVVQASEINADGIGRDASTLAHKIKAAQYVRKNPGEVCPAKWEEGAKTLQPGLDLVGKI</sequence>
<protein>
    <recommendedName>
        <fullName>Alkyl hydroperoxide reductase C</fullName>
        <ecNumber evidence="1">1.11.1.26</ecNumber>
    </recommendedName>
    <alternativeName>
        <fullName>Peroxiredoxin</fullName>
    </alternativeName>
    <alternativeName>
        <fullName>Thioredoxin peroxidase</fullName>
    </alternativeName>
</protein>
<name>AHPC_STAAS</name>
<accession>Q6GC91</accession>
<proteinExistence type="inferred from homology"/>
<dbReference type="EC" id="1.11.1.26" evidence="1"/>
<dbReference type="EMBL" id="BX571857">
    <property type="protein sequence ID" value="CAG42129.1"/>
    <property type="molecule type" value="Genomic_DNA"/>
</dbReference>
<dbReference type="RefSeq" id="WP_000052781.1">
    <property type="nucleotide sequence ID" value="NC_002953.3"/>
</dbReference>
<dbReference type="SMR" id="Q6GC91"/>
<dbReference type="KEGG" id="sas:SAS0358"/>
<dbReference type="HOGENOM" id="CLU_042529_21_3_9"/>
<dbReference type="GO" id="GO:0005829">
    <property type="term" value="C:cytosol"/>
    <property type="evidence" value="ECO:0007669"/>
    <property type="project" value="TreeGrafter"/>
</dbReference>
<dbReference type="GO" id="GO:0102039">
    <property type="term" value="F:NADH-dependent peroxiredoxin activity"/>
    <property type="evidence" value="ECO:0007669"/>
    <property type="project" value="UniProtKB-EC"/>
</dbReference>
<dbReference type="GO" id="GO:0008379">
    <property type="term" value="F:thioredoxin peroxidase activity"/>
    <property type="evidence" value="ECO:0007669"/>
    <property type="project" value="TreeGrafter"/>
</dbReference>
<dbReference type="GO" id="GO:0045454">
    <property type="term" value="P:cell redox homeostasis"/>
    <property type="evidence" value="ECO:0007669"/>
    <property type="project" value="TreeGrafter"/>
</dbReference>
<dbReference type="GO" id="GO:0033554">
    <property type="term" value="P:cellular response to stress"/>
    <property type="evidence" value="ECO:0007669"/>
    <property type="project" value="TreeGrafter"/>
</dbReference>
<dbReference type="GO" id="GO:0042744">
    <property type="term" value="P:hydrogen peroxide catabolic process"/>
    <property type="evidence" value="ECO:0007669"/>
    <property type="project" value="TreeGrafter"/>
</dbReference>
<dbReference type="GO" id="GO:0006979">
    <property type="term" value="P:response to oxidative stress"/>
    <property type="evidence" value="ECO:0007669"/>
    <property type="project" value="InterPro"/>
</dbReference>
<dbReference type="CDD" id="cd03015">
    <property type="entry name" value="PRX_Typ2cys"/>
    <property type="match status" value="1"/>
</dbReference>
<dbReference type="FunFam" id="3.40.30.10:FF:000002">
    <property type="entry name" value="Alkyl hydroperoxide reductase C"/>
    <property type="match status" value="1"/>
</dbReference>
<dbReference type="Gene3D" id="3.40.30.10">
    <property type="entry name" value="Glutaredoxin"/>
    <property type="match status" value="1"/>
</dbReference>
<dbReference type="InterPro" id="IPR017559">
    <property type="entry name" value="AhpC"/>
</dbReference>
<dbReference type="InterPro" id="IPR000866">
    <property type="entry name" value="AhpC/TSA"/>
</dbReference>
<dbReference type="InterPro" id="IPR050217">
    <property type="entry name" value="Peroxiredoxin"/>
</dbReference>
<dbReference type="InterPro" id="IPR024706">
    <property type="entry name" value="Peroxiredoxin_AhpC-typ"/>
</dbReference>
<dbReference type="InterPro" id="IPR019479">
    <property type="entry name" value="Peroxiredoxin_C"/>
</dbReference>
<dbReference type="InterPro" id="IPR036249">
    <property type="entry name" value="Thioredoxin-like_sf"/>
</dbReference>
<dbReference type="InterPro" id="IPR013766">
    <property type="entry name" value="Thioredoxin_domain"/>
</dbReference>
<dbReference type="NCBIfam" id="TIGR03137">
    <property type="entry name" value="AhpC"/>
    <property type="match status" value="1"/>
</dbReference>
<dbReference type="PANTHER" id="PTHR10681:SF121">
    <property type="entry name" value="ALKYL HYDROPEROXIDE REDUCTASE C"/>
    <property type="match status" value="1"/>
</dbReference>
<dbReference type="PANTHER" id="PTHR10681">
    <property type="entry name" value="THIOREDOXIN PEROXIDASE"/>
    <property type="match status" value="1"/>
</dbReference>
<dbReference type="Pfam" id="PF10417">
    <property type="entry name" value="1-cysPrx_C"/>
    <property type="match status" value="1"/>
</dbReference>
<dbReference type="Pfam" id="PF00578">
    <property type="entry name" value="AhpC-TSA"/>
    <property type="match status" value="1"/>
</dbReference>
<dbReference type="PIRSF" id="PIRSF000239">
    <property type="entry name" value="AHPC"/>
    <property type="match status" value="1"/>
</dbReference>
<dbReference type="SUPFAM" id="SSF52833">
    <property type="entry name" value="Thioredoxin-like"/>
    <property type="match status" value="1"/>
</dbReference>
<dbReference type="PROSITE" id="PS51352">
    <property type="entry name" value="THIOREDOXIN_2"/>
    <property type="match status" value="1"/>
</dbReference>
<feature type="chain" id="PRO_0000135126" description="Alkyl hydroperoxide reductase C">
    <location>
        <begin position="1"/>
        <end position="189"/>
    </location>
</feature>
<feature type="domain" description="Thioredoxin" evidence="3">
    <location>
        <begin position="2"/>
        <end position="159"/>
    </location>
</feature>
<feature type="active site" description="Cysteine sulfenic acid (-SOH) intermediate" evidence="1">
    <location>
        <position position="49"/>
    </location>
</feature>
<feature type="disulfide bond" description="Interchain (with C-168); in linked form" evidence="1">
    <location>
        <position position="49"/>
    </location>
</feature>
<feature type="disulfide bond" description="Interchain (with C-49); in linked form" evidence="1">
    <location>
        <position position="168"/>
    </location>
</feature>
<comment type="function">
    <text evidence="1">Thiol-specific peroxidase that catalyzes the reduction of hydrogen peroxide and organic hydroperoxides to water and alcohols, respectively. Plays a role in cell protection against oxidative stress by detoxifying peroxides.</text>
</comment>
<comment type="catalytic activity">
    <reaction evidence="1">
        <text>a hydroperoxide + NADH + H(+) = an alcohol + NAD(+) + H2O</text>
        <dbReference type="Rhea" id="RHEA:62628"/>
        <dbReference type="ChEBI" id="CHEBI:15377"/>
        <dbReference type="ChEBI" id="CHEBI:15378"/>
        <dbReference type="ChEBI" id="CHEBI:30879"/>
        <dbReference type="ChEBI" id="CHEBI:35924"/>
        <dbReference type="ChEBI" id="CHEBI:57540"/>
        <dbReference type="ChEBI" id="CHEBI:57945"/>
        <dbReference type="EC" id="1.11.1.26"/>
    </reaction>
</comment>
<comment type="subunit">
    <text evidence="1">Homodimer; disulfide-linked, upon oxidation. 5 homodimers assemble to form a ring-like decamer.</text>
</comment>
<comment type="subcellular location">
    <subcellularLocation>
        <location evidence="2">Cytoplasm</location>
    </subcellularLocation>
</comment>
<comment type="miscellaneous">
    <text evidence="1">The active site is a conserved redox-active cysteine residue, the peroxidatic cysteine (C(P)), which makes the nucleophilic attack on the peroxide substrate. The peroxide oxidizes the C(P)-SH to cysteine sulfenic acid (C(P)-SOH), which then reacts with another cysteine residue, the resolving cysteine (C(R)), to form a disulfide bridge. The disulfide is subsequently reduced by an appropriate electron donor to complete the catalytic cycle. In this typical 2-Cys peroxiredoxin, C(R) is provided by the other dimeric subunit to form an intersubunit disulfide. The disulfide is subsequently reduced by AhpF.</text>
</comment>
<comment type="similarity">
    <text evidence="4">Belongs to the peroxiredoxin family. AhpC/Prx1 subfamily.</text>
</comment>
<reference key="1">
    <citation type="journal article" date="2004" name="Proc. Natl. Acad. Sci. U.S.A.">
        <title>Complete genomes of two clinical Staphylococcus aureus strains: evidence for the rapid evolution of virulence and drug resistance.</title>
        <authorList>
            <person name="Holden M.T.G."/>
            <person name="Feil E.J."/>
            <person name="Lindsay J.A."/>
            <person name="Peacock S.J."/>
            <person name="Day N.P.J."/>
            <person name="Enright M.C."/>
            <person name="Foster T.J."/>
            <person name="Moore C.E."/>
            <person name="Hurst L."/>
            <person name="Atkin R."/>
            <person name="Barron A."/>
            <person name="Bason N."/>
            <person name="Bentley S.D."/>
            <person name="Chillingworth C."/>
            <person name="Chillingworth T."/>
            <person name="Churcher C."/>
            <person name="Clark L."/>
            <person name="Corton C."/>
            <person name="Cronin A."/>
            <person name="Doggett J."/>
            <person name="Dowd L."/>
            <person name="Feltwell T."/>
            <person name="Hance Z."/>
            <person name="Harris B."/>
            <person name="Hauser H."/>
            <person name="Holroyd S."/>
            <person name="Jagels K."/>
            <person name="James K.D."/>
            <person name="Lennard N."/>
            <person name="Line A."/>
            <person name="Mayes R."/>
            <person name="Moule S."/>
            <person name="Mungall K."/>
            <person name="Ormond D."/>
            <person name="Quail M.A."/>
            <person name="Rabbinowitsch E."/>
            <person name="Rutherford K.M."/>
            <person name="Sanders M."/>
            <person name="Sharp S."/>
            <person name="Simmonds M."/>
            <person name="Stevens K."/>
            <person name="Whitehead S."/>
            <person name="Barrell B.G."/>
            <person name="Spratt B.G."/>
            <person name="Parkhill J."/>
        </authorList>
    </citation>
    <scope>NUCLEOTIDE SEQUENCE [LARGE SCALE GENOMIC DNA]</scope>
    <source>
        <strain>MSSA476</strain>
    </source>
</reference>
<gene>
    <name type="primary">ahpC</name>
    <name type="ordered locus">SAS0358</name>
</gene>
<keyword id="KW-0049">Antioxidant</keyword>
<keyword id="KW-0963">Cytoplasm</keyword>
<keyword id="KW-1015">Disulfide bond</keyword>
<keyword id="KW-0560">Oxidoreductase</keyword>
<keyword id="KW-0575">Peroxidase</keyword>
<keyword id="KW-0676">Redox-active center</keyword>
<evidence type="ECO:0000250" key="1">
    <source>
        <dbReference type="UniProtKB" id="P0A251"/>
    </source>
</evidence>
<evidence type="ECO:0000250" key="2">
    <source>
        <dbReference type="UniProtKB" id="P0AE08"/>
    </source>
</evidence>
<evidence type="ECO:0000255" key="3">
    <source>
        <dbReference type="PROSITE-ProRule" id="PRU00691"/>
    </source>
</evidence>
<evidence type="ECO:0000305" key="4"/>
<organism>
    <name type="scientific">Staphylococcus aureus (strain MSSA476)</name>
    <dbReference type="NCBI Taxonomy" id="282459"/>
    <lineage>
        <taxon>Bacteria</taxon>
        <taxon>Bacillati</taxon>
        <taxon>Bacillota</taxon>
        <taxon>Bacilli</taxon>
        <taxon>Bacillales</taxon>
        <taxon>Staphylococcaceae</taxon>
        <taxon>Staphylococcus</taxon>
    </lineage>
</organism>